<feature type="chain" id="PRO_1000080712" description="Transcriptional repressor NrdR">
    <location>
        <begin position="1"/>
        <end position="153"/>
    </location>
</feature>
<feature type="domain" description="ATP-cone" evidence="1">
    <location>
        <begin position="49"/>
        <end position="139"/>
    </location>
</feature>
<feature type="zinc finger region" evidence="1">
    <location>
        <begin position="3"/>
        <end position="34"/>
    </location>
</feature>
<dbReference type="EMBL" id="CP000764">
    <property type="protein sequence ID" value="ABS23485.1"/>
    <property type="molecule type" value="Genomic_DNA"/>
</dbReference>
<dbReference type="RefSeq" id="WP_012095725.1">
    <property type="nucleotide sequence ID" value="NC_009674.1"/>
</dbReference>
<dbReference type="SMR" id="A7GTM7"/>
<dbReference type="STRING" id="315749.Bcer98_3266"/>
<dbReference type="GeneID" id="33898511"/>
<dbReference type="KEGG" id="bcy:Bcer98_3266"/>
<dbReference type="eggNOG" id="COG1327">
    <property type="taxonomic scope" value="Bacteria"/>
</dbReference>
<dbReference type="HOGENOM" id="CLU_108412_0_0_9"/>
<dbReference type="OrthoDB" id="9807461at2"/>
<dbReference type="Proteomes" id="UP000002300">
    <property type="component" value="Chromosome"/>
</dbReference>
<dbReference type="GO" id="GO:0005524">
    <property type="term" value="F:ATP binding"/>
    <property type="evidence" value="ECO:0007669"/>
    <property type="project" value="UniProtKB-KW"/>
</dbReference>
<dbReference type="GO" id="GO:0003677">
    <property type="term" value="F:DNA binding"/>
    <property type="evidence" value="ECO:0007669"/>
    <property type="project" value="UniProtKB-KW"/>
</dbReference>
<dbReference type="GO" id="GO:0008270">
    <property type="term" value="F:zinc ion binding"/>
    <property type="evidence" value="ECO:0007669"/>
    <property type="project" value="UniProtKB-UniRule"/>
</dbReference>
<dbReference type="GO" id="GO:0045892">
    <property type="term" value="P:negative regulation of DNA-templated transcription"/>
    <property type="evidence" value="ECO:0007669"/>
    <property type="project" value="UniProtKB-UniRule"/>
</dbReference>
<dbReference type="HAMAP" id="MF_00440">
    <property type="entry name" value="NrdR"/>
    <property type="match status" value="1"/>
</dbReference>
<dbReference type="InterPro" id="IPR005144">
    <property type="entry name" value="ATP-cone_dom"/>
</dbReference>
<dbReference type="InterPro" id="IPR055173">
    <property type="entry name" value="NrdR-like_N"/>
</dbReference>
<dbReference type="InterPro" id="IPR003796">
    <property type="entry name" value="RNR_NrdR-like"/>
</dbReference>
<dbReference type="NCBIfam" id="TIGR00244">
    <property type="entry name" value="transcriptional regulator NrdR"/>
    <property type="match status" value="1"/>
</dbReference>
<dbReference type="PANTHER" id="PTHR30455">
    <property type="entry name" value="TRANSCRIPTIONAL REPRESSOR NRDR"/>
    <property type="match status" value="1"/>
</dbReference>
<dbReference type="PANTHER" id="PTHR30455:SF2">
    <property type="entry name" value="TRANSCRIPTIONAL REPRESSOR NRDR"/>
    <property type="match status" value="1"/>
</dbReference>
<dbReference type="Pfam" id="PF03477">
    <property type="entry name" value="ATP-cone"/>
    <property type="match status" value="1"/>
</dbReference>
<dbReference type="Pfam" id="PF22811">
    <property type="entry name" value="Zn_ribbon_NrdR"/>
    <property type="match status" value="1"/>
</dbReference>
<dbReference type="PROSITE" id="PS51161">
    <property type="entry name" value="ATP_CONE"/>
    <property type="match status" value="1"/>
</dbReference>
<organism>
    <name type="scientific">Bacillus cytotoxicus (strain DSM 22905 / CIP 110041 / 391-98 / NVH 391-98)</name>
    <dbReference type="NCBI Taxonomy" id="315749"/>
    <lineage>
        <taxon>Bacteria</taxon>
        <taxon>Bacillati</taxon>
        <taxon>Bacillota</taxon>
        <taxon>Bacilli</taxon>
        <taxon>Bacillales</taxon>
        <taxon>Bacillaceae</taxon>
        <taxon>Bacillus</taxon>
        <taxon>Bacillus cereus group</taxon>
    </lineage>
</organism>
<proteinExistence type="inferred from homology"/>
<protein>
    <recommendedName>
        <fullName evidence="1">Transcriptional repressor NrdR</fullName>
    </recommendedName>
</protein>
<accession>A7GTM7</accession>
<sequence>MRCPSCFHNGTRVLDSRPVDEGRSIRRRRECESCLNRFTTFERVEEPPLIVVKKEGTREEFNKEKILRGLIKACEKRPVSLKQLEEVTQNVERELRNLGISEVKSDMIGEIVMEALRDIDDVAYVRFASVYRQFKDLNVFIEELKDILQKERE</sequence>
<evidence type="ECO:0000255" key="1">
    <source>
        <dbReference type="HAMAP-Rule" id="MF_00440"/>
    </source>
</evidence>
<reference key="1">
    <citation type="journal article" date="2008" name="Chem. Biol. Interact.">
        <title>Extending the Bacillus cereus group genomics to putative food-borne pathogens of different toxicity.</title>
        <authorList>
            <person name="Lapidus A."/>
            <person name="Goltsman E."/>
            <person name="Auger S."/>
            <person name="Galleron N."/>
            <person name="Segurens B."/>
            <person name="Dossat C."/>
            <person name="Land M.L."/>
            <person name="Broussolle V."/>
            <person name="Brillard J."/>
            <person name="Guinebretiere M.-H."/>
            <person name="Sanchis V."/>
            <person name="Nguen-the C."/>
            <person name="Lereclus D."/>
            <person name="Richardson P."/>
            <person name="Wincker P."/>
            <person name="Weissenbach J."/>
            <person name="Ehrlich S.D."/>
            <person name="Sorokin A."/>
        </authorList>
    </citation>
    <scope>NUCLEOTIDE SEQUENCE [LARGE SCALE GENOMIC DNA]</scope>
    <source>
        <strain>DSM 22905 / CIP 110041 / 391-98 / NVH 391-98</strain>
    </source>
</reference>
<gene>
    <name evidence="1" type="primary">nrdR</name>
    <name type="ordered locus">Bcer98_3266</name>
</gene>
<name>NRDR_BACCN</name>
<keyword id="KW-0067">ATP-binding</keyword>
<keyword id="KW-0238">DNA-binding</keyword>
<keyword id="KW-0479">Metal-binding</keyword>
<keyword id="KW-0547">Nucleotide-binding</keyword>
<keyword id="KW-0678">Repressor</keyword>
<keyword id="KW-0804">Transcription</keyword>
<keyword id="KW-0805">Transcription regulation</keyword>
<keyword id="KW-0862">Zinc</keyword>
<keyword id="KW-0863">Zinc-finger</keyword>
<comment type="function">
    <text evidence="1">Negatively regulates transcription of bacterial ribonucleotide reductase nrd genes and operons by binding to NrdR-boxes.</text>
</comment>
<comment type="cofactor">
    <cofactor evidence="1">
        <name>Zn(2+)</name>
        <dbReference type="ChEBI" id="CHEBI:29105"/>
    </cofactor>
    <text evidence="1">Binds 1 zinc ion.</text>
</comment>
<comment type="similarity">
    <text evidence="1">Belongs to the NrdR family.</text>
</comment>